<proteinExistence type="evidence at transcript level"/>
<keyword id="KW-1015">Disulfide bond</keyword>
<keyword id="KW-0272">Extracellular matrix</keyword>
<keyword id="KW-0325">Glycoprotein</keyword>
<keyword id="KW-0433">Leucine-rich repeat</keyword>
<keyword id="KW-0654">Proteoglycan</keyword>
<keyword id="KW-0873">Pyrrolidone carboxylic acid</keyword>
<keyword id="KW-1185">Reference proteome</keyword>
<keyword id="KW-0677">Repeat</keyword>
<keyword id="KW-0964">Secreted</keyword>
<keyword id="KW-0732">Signal</keyword>
<keyword id="KW-0765">Sulfation</keyword>
<evidence type="ECO:0000250" key="1"/>
<evidence type="ECO:0000250" key="2">
    <source>
        <dbReference type="UniProtKB" id="P51885"/>
    </source>
</evidence>
<evidence type="ECO:0000250" key="3">
    <source>
        <dbReference type="UniProtKB" id="P51890"/>
    </source>
</evidence>
<evidence type="ECO:0000255" key="4"/>
<evidence type="ECO:0000305" key="5"/>
<gene>
    <name type="primary">LUM</name>
    <name type="synonym">LDC</name>
</gene>
<organism>
    <name type="scientific">Coturnix japonica</name>
    <name type="common">Japanese quail</name>
    <name type="synonym">Coturnix coturnix japonica</name>
    <dbReference type="NCBI Taxonomy" id="93934"/>
    <lineage>
        <taxon>Eukaryota</taxon>
        <taxon>Metazoa</taxon>
        <taxon>Chordata</taxon>
        <taxon>Craniata</taxon>
        <taxon>Vertebrata</taxon>
        <taxon>Euteleostomi</taxon>
        <taxon>Archelosauria</taxon>
        <taxon>Archosauria</taxon>
        <taxon>Dinosauria</taxon>
        <taxon>Saurischia</taxon>
        <taxon>Theropoda</taxon>
        <taxon>Coelurosauria</taxon>
        <taxon>Aves</taxon>
        <taxon>Neognathae</taxon>
        <taxon>Galloanserae</taxon>
        <taxon>Galliformes</taxon>
        <taxon>Phasianidae</taxon>
        <taxon>Perdicinae</taxon>
        <taxon>Coturnix</taxon>
    </lineage>
</organism>
<feature type="signal peptide" evidence="4">
    <location>
        <begin position="1"/>
        <end position="18"/>
    </location>
</feature>
<feature type="chain" id="PRO_0000032737" description="Lumican">
    <location>
        <begin position="19"/>
        <end position="343"/>
    </location>
</feature>
<feature type="domain" description="LRRNT">
    <location>
        <begin position="31"/>
        <end position="69"/>
    </location>
</feature>
<feature type="repeat" description="LRR 1">
    <location>
        <begin position="70"/>
        <end position="91"/>
    </location>
</feature>
<feature type="repeat" description="LRR 2">
    <location>
        <begin position="94"/>
        <end position="117"/>
    </location>
</feature>
<feature type="repeat" description="LRR 3">
    <location>
        <begin position="120"/>
        <end position="140"/>
    </location>
</feature>
<feature type="repeat" description="LRR 4">
    <location>
        <begin position="141"/>
        <end position="162"/>
    </location>
</feature>
<feature type="repeat" description="LRR 5">
    <location>
        <begin position="165"/>
        <end position="186"/>
    </location>
</feature>
<feature type="repeat" description="LRR 6">
    <location>
        <begin position="190"/>
        <end position="211"/>
    </location>
</feature>
<feature type="repeat" description="LRR 7">
    <location>
        <begin position="212"/>
        <end position="232"/>
    </location>
</feature>
<feature type="repeat" description="LRR 8">
    <location>
        <begin position="235"/>
        <end position="255"/>
    </location>
</feature>
<feature type="repeat" description="LRR 9">
    <location>
        <begin position="260"/>
        <end position="281"/>
    </location>
</feature>
<feature type="repeat" description="LRR 10">
    <location>
        <begin position="282"/>
        <end position="301"/>
    </location>
</feature>
<feature type="repeat" description="LRR 11">
    <location>
        <begin position="310"/>
        <end position="330"/>
    </location>
</feature>
<feature type="modified residue" description="Pyrrolidone carboxylic acid" evidence="1">
    <location>
        <position position="19"/>
    </location>
</feature>
<feature type="modified residue" description="Sulfotyrosine" evidence="2">
    <location>
        <position position="20"/>
    </location>
</feature>
<feature type="modified residue" description="Sulfotyrosine" evidence="2">
    <location>
        <position position="22"/>
    </location>
</feature>
<feature type="glycosylation site" description="N-linked (GlcNAc...) (keratan sulfate) asparagine" evidence="4">
    <location>
        <position position="91"/>
    </location>
</feature>
<feature type="glycosylation site" description="N-linked (GlcNAc...) (keratan sulfate) asparagine" evidence="4">
    <location>
        <position position="130"/>
    </location>
</feature>
<feature type="glycosylation site" description="N-linked (GlcNAc...) (keratan sulfate) asparagine" evidence="4">
    <location>
        <position position="165"/>
    </location>
</feature>
<feature type="glycosylation site" description="N-linked (GlcNAc...) (keratan sulfate) asparagine" evidence="4">
    <location>
        <position position="257"/>
    </location>
</feature>
<feature type="glycosylation site" description="N-linked (GlcNAc...) asparagine" evidence="4">
    <location>
        <position position="320"/>
    </location>
</feature>
<feature type="disulfide bond" evidence="1">
    <location>
        <begin position="300"/>
        <end position="333"/>
    </location>
</feature>
<accession>Q9DE67</accession>
<reference key="1">
    <citation type="journal article" date="2000" name="Matrix Biol.">
        <title>Molecular cloning and relative tissue expression of decorin and lumican in embryonic quail cornea.</title>
        <authorList>
            <person name="Corpuz L.M."/>
            <person name="Dunlevy J.R."/>
            <person name="Hassell J.R."/>
            <person name="Conrad A.H."/>
            <person name="Conrad G.W."/>
        </authorList>
    </citation>
    <scope>NUCLEOTIDE SEQUENCE [MRNA]</scope>
    <source>
        <tissue>Cornea</tissue>
    </source>
</reference>
<sequence length="343" mass="38642">MTLNSLPIFLVLISGIFCQYDYGPADDYGYDPFGPSTAVCAPECNCPLSYPTAMYCDNLKLKTIPIVPSGIKYLYLRNNMIESIEENTFDNVTDLQWLILDHNHLENSKIKGRVFSKLKNLKKLHINYNNLTEAVGPLPKTLDDLQLSHNKITKVNPGALEGLVNLTVIHLQNNQLKADSISGAFKGLNSLLYLDLSFNQLTKLPTGLPHSLLMLYFDNNQISNIPDEYFQGFKTLQYLRLSHNKLTDSGIPGNVFNITSLVELDLSFNQLKSIPTVSENLENFYLQVNKINKFPLSSFCKVVGPLTYSKITHLRLDGNNLTRADLPQEMYNCLRVAAEISLE</sequence>
<protein>
    <recommendedName>
        <fullName>Lumican</fullName>
    </recommendedName>
    <alternativeName>
        <fullName>Keratan sulfate proteoglycan lumican</fullName>
        <shortName>KSPG lumican</shortName>
    </alternativeName>
</protein>
<name>LUM_COTJA</name>
<comment type="subunit">
    <text evidence="1">Binds to laminin.</text>
</comment>
<comment type="subcellular location">
    <subcellularLocation>
        <location evidence="1">Secreted</location>
        <location evidence="1">Extracellular space</location>
        <location evidence="1">Extracellular matrix</location>
    </subcellularLocation>
</comment>
<comment type="PTM">
    <text evidence="3">Contains keratan sulfate.</text>
</comment>
<comment type="similarity">
    <text evidence="5">Belongs to the small leucine-rich proteoglycan (SLRP) family. SLRP class II subfamily.</text>
</comment>
<dbReference type="EMBL" id="AF125251">
    <property type="protein sequence ID" value="AAG48155.1"/>
    <property type="molecule type" value="mRNA"/>
</dbReference>
<dbReference type="RefSeq" id="NP_001310144.1">
    <property type="nucleotide sequence ID" value="NM_001323215.1"/>
</dbReference>
<dbReference type="SMR" id="Q9DE67"/>
<dbReference type="GlyCosmos" id="Q9DE67">
    <property type="glycosylation" value="5 sites, No reported glycans"/>
</dbReference>
<dbReference type="Ensembl" id="ENSCJPT00005008308.1">
    <property type="protein sequence ID" value="ENSCJPP00005005065.1"/>
    <property type="gene ID" value="ENSCJPG00005004898.1"/>
</dbReference>
<dbReference type="GeneID" id="107311489"/>
<dbReference type="KEGG" id="cjo:107311489"/>
<dbReference type="CTD" id="4060"/>
<dbReference type="GeneTree" id="ENSGT00940000158177"/>
<dbReference type="OrthoDB" id="6359842at2759"/>
<dbReference type="Proteomes" id="UP000694412">
    <property type="component" value="Chromosome 1"/>
</dbReference>
<dbReference type="GO" id="GO:0005615">
    <property type="term" value="C:extracellular space"/>
    <property type="evidence" value="ECO:0007669"/>
    <property type="project" value="TreeGrafter"/>
</dbReference>
<dbReference type="GO" id="GO:0005583">
    <property type="term" value="C:fibrillar collagen trimer"/>
    <property type="evidence" value="ECO:0007669"/>
    <property type="project" value="Ensembl"/>
</dbReference>
<dbReference type="GO" id="GO:0005518">
    <property type="term" value="F:collagen binding"/>
    <property type="evidence" value="ECO:0007669"/>
    <property type="project" value="Ensembl"/>
</dbReference>
<dbReference type="GO" id="GO:0045944">
    <property type="term" value="P:positive regulation of transcription by RNA polymerase II"/>
    <property type="evidence" value="ECO:0007669"/>
    <property type="project" value="Ensembl"/>
</dbReference>
<dbReference type="GO" id="GO:0032914">
    <property type="term" value="P:positive regulation of transforming growth factor beta1 production"/>
    <property type="evidence" value="ECO:0007669"/>
    <property type="project" value="Ensembl"/>
</dbReference>
<dbReference type="FunFam" id="3.80.10.10:FF:000063">
    <property type="entry name" value="Lumican"/>
    <property type="match status" value="1"/>
</dbReference>
<dbReference type="FunFam" id="3.80.10.10:FF:000073">
    <property type="entry name" value="Lumican"/>
    <property type="match status" value="1"/>
</dbReference>
<dbReference type="FunFam" id="3.80.10.10:FF:000151">
    <property type="entry name" value="Lumican"/>
    <property type="match status" value="1"/>
</dbReference>
<dbReference type="Gene3D" id="3.80.10.10">
    <property type="entry name" value="Ribonuclease Inhibitor"/>
    <property type="match status" value="3"/>
</dbReference>
<dbReference type="InterPro" id="IPR001611">
    <property type="entry name" value="Leu-rich_rpt"/>
</dbReference>
<dbReference type="InterPro" id="IPR003591">
    <property type="entry name" value="Leu-rich_rpt_typical-subtyp"/>
</dbReference>
<dbReference type="InterPro" id="IPR032675">
    <property type="entry name" value="LRR_dom_sf"/>
</dbReference>
<dbReference type="InterPro" id="IPR000372">
    <property type="entry name" value="LRRNT"/>
</dbReference>
<dbReference type="InterPro" id="IPR050333">
    <property type="entry name" value="SLRP"/>
</dbReference>
<dbReference type="PANTHER" id="PTHR45712">
    <property type="entry name" value="AGAP008170-PA"/>
    <property type="match status" value="1"/>
</dbReference>
<dbReference type="PANTHER" id="PTHR45712:SF6">
    <property type="entry name" value="LUMICAN"/>
    <property type="match status" value="1"/>
</dbReference>
<dbReference type="Pfam" id="PF00560">
    <property type="entry name" value="LRR_1"/>
    <property type="match status" value="1"/>
</dbReference>
<dbReference type="Pfam" id="PF13855">
    <property type="entry name" value="LRR_8"/>
    <property type="match status" value="3"/>
</dbReference>
<dbReference type="Pfam" id="PF01462">
    <property type="entry name" value="LRRNT"/>
    <property type="match status" value="1"/>
</dbReference>
<dbReference type="PRINTS" id="PR00019">
    <property type="entry name" value="LEURICHRPT"/>
</dbReference>
<dbReference type="SMART" id="SM00364">
    <property type="entry name" value="LRR_BAC"/>
    <property type="match status" value="5"/>
</dbReference>
<dbReference type="SMART" id="SM00365">
    <property type="entry name" value="LRR_SD22"/>
    <property type="match status" value="5"/>
</dbReference>
<dbReference type="SMART" id="SM00369">
    <property type="entry name" value="LRR_TYP"/>
    <property type="match status" value="8"/>
</dbReference>
<dbReference type="SMART" id="SM00013">
    <property type="entry name" value="LRRNT"/>
    <property type="match status" value="1"/>
</dbReference>
<dbReference type="SUPFAM" id="SSF52058">
    <property type="entry name" value="L domain-like"/>
    <property type="match status" value="1"/>
</dbReference>
<dbReference type="PROSITE" id="PS51450">
    <property type="entry name" value="LRR"/>
    <property type="match status" value="10"/>
</dbReference>